<proteinExistence type="predicted"/>
<evidence type="ECO:0000255" key="1">
    <source>
        <dbReference type="PROSITE-ProRule" id="PRU00393"/>
    </source>
</evidence>
<evidence type="ECO:0000269" key="2">
    <source>
    </source>
</evidence>
<evidence type="ECO:0000303" key="3">
    <source>
    </source>
</evidence>
<evidence type="ECO:0000305" key="4"/>
<sequence length="444" mass="48305">MDDLAQLQSCSNELATAITSLASYAGSGNTQQAINNQSPFEPEEVQRAKGNILAVATKLRTLICGPTDFLQHLASQVSEILACLRWLGEFQILACIPLMGSAPIKDIADLTNVPESRLRRIIRLTATAGFLREPERDHVAHTPLSASFFSNPSLLDAAMFLSESAAPIALQMPQTAQVKEKSSSPPSNGTPCDLALPRGTEFHTACKRRPKLNRQWLAYLHHAAGLHTADDIAAVLTQLDWPKLTNGRDGSIIEYAISRVDHCHAQVGVSSWSTSIARRLAHFYPALHFTVQISDPAVAITQEEFHPRITATSRILGTRQTAAGAAVYILHLPFASSSPSAVMTELAVHLDVLRSRSGILLILTPRLLPQPGSLPDPEVEATARSRDLALGQMADEGEMEMLELLETIDTVRDSLGKLVVTSKLRSRNNLVVAVTVEYQRDLPS</sequence>
<reference key="1">
    <citation type="journal article" date="2018" name="Proc. Natl. Acad. Sci. U.S.A.">
        <title>Linking secondary metabolites to gene clusters through genome sequencing of six diverse Aspergillus species.</title>
        <authorList>
            <person name="Kjaerboelling I."/>
            <person name="Vesth T.C."/>
            <person name="Frisvad J.C."/>
            <person name="Nybo J.L."/>
            <person name="Theobald S."/>
            <person name="Kuo A."/>
            <person name="Bowyer P."/>
            <person name="Matsuda Y."/>
            <person name="Mondo S."/>
            <person name="Lyhne E.K."/>
            <person name="Kogle M.E."/>
            <person name="Clum A."/>
            <person name="Lipzen A."/>
            <person name="Salamov A."/>
            <person name="Ngan C.Y."/>
            <person name="Daum C."/>
            <person name="Chiniquy J."/>
            <person name="Barry K."/>
            <person name="LaButti K."/>
            <person name="Haridas S."/>
            <person name="Simmons B.A."/>
            <person name="Magnuson J.K."/>
            <person name="Mortensen U.H."/>
            <person name="Larsen T.O."/>
            <person name="Grigoriev I.V."/>
            <person name="Baker S.E."/>
            <person name="Andersen M.R."/>
        </authorList>
    </citation>
    <scope>NUCLEOTIDE SEQUENCE [LARGE SCALE GENOMIC DNA]</scope>
    <source>
        <strain>IBT 16806</strain>
    </source>
</reference>
<reference key="2">
    <citation type="journal article" date="2018" name="Org. Lett.">
        <title>Genetic characterization of neosartorin biosynthesis provides insight into heterodimeric natural product generation.</title>
        <authorList>
            <person name="Matsuda Y."/>
            <person name="Gotfredsen C.H."/>
            <person name="Larsen T.O."/>
        </authorList>
    </citation>
    <scope>FUNCTION</scope>
</reference>
<gene>
    <name evidence="3" type="primary">nsrH</name>
    <name type="ORF">P174DRAFT_512932</name>
</gene>
<feature type="chain" id="PRO_0000453504" description="Transcriptional coactivator nsrH">
    <location>
        <begin position="1"/>
        <end position="444"/>
    </location>
</feature>
<feature type="domain" description="HTH iclR-type" evidence="1">
    <location>
        <begin position="74"/>
        <end position="144"/>
    </location>
</feature>
<feature type="DNA-binding region" description="H-T-H motif" evidence="1">
    <location>
        <begin position="104"/>
        <end position="123"/>
    </location>
</feature>
<dbReference type="EMBL" id="MSZS01000005">
    <property type="protein sequence ID" value="PKX92302.1"/>
    <property type="molecule type" value="Genomic_DNA"/>
</dbReference>
<dbReference type="SMR" id="A0A2I1C3U1"/>
<dbReference type="STRING" id="1392255.A0A2I1C3U1"/>
<dbReference type="VEuPathDB" id="FungiDB:P174DRAFT_512932"/>
<dbReference type="OMA" id="CSNELAT"/>
<dbReference type="OrthoDB" id="1606438at2759"/>
<dbReference type="Proteomes" id="UP000234474">
    <property type="component" value="Unassembled WGS sequence"/>
</dbReference>
<dbReference type="GO" id="GO:0005634">
    <property type="term" value="C:nucleus"/>
    <property type="evidence" value="ECO:0007669"/>
    <property type="project" value="UniProtKB-SubCell"/>
</dbReference>
<dbReference type="GO" id="GO:0003677">
    <property type="term" value="F:DNA binding"/>
    <property type="evidence" value="ECO:0007669"/>
    <property type="project" value="UniProtKB-KW"/>
</dbReference>
<dbReference type="Gene3D" id="3.40.50.150">
    <property type="entry name" value="Vaccinia Virus protein VP39"/>
    <property type="match status" value="1"/>
</dbReference>
<dbReference type="Gene3D" id="1.10.10.10">
    <property type="entry name" value="Winged helix-like DNA-binding domain superfamily/Winged helix DNA-binding domain"/>
    <property type="match status" value="1"/>
</dbReference>
<dbReference type="InterPro" id="IPR029063">
    <property type="entry name" value="SAM-dependent_MTases_sf"/>
</dbReference>
<dbReference type="InterPro" id="IPR036388">
    <property type="entry name" value="WH-like_DNA-bd_sf"/>
</dbReference>
<dbReference type="InterPro" id="IPR036390">
    <property type="entry name" value="WH_DNA-bd_sf"/>
</dbReference>
<dbReference type="PANTHER" id="PTHR43712:SF15">
    <property type="entry name" value="MONODICTYPHENONE CLUSTER TRANSCRIPTIONAL COACTIVATOR MDPA"/>
    <property type="match status" value="1"/>
</dbReference>
<dbReference type="PANTHER" id="PTHR43712">
    <property type="entry name" value="PUTATIVE (AFU_ORTHOLOGUE AFUA_4G14580)-RELATED"/>
    <property type="match status" value="1"/>
</dbReference>
<dbReference type="SUPFAM" id="SSF46785">
    <property type="entry name" value="Winged helix' DNA-binding domain"/>
    <property type="match status" value="1"/>
</dbReference>
<accession>A0A2I1C3U1</accession>
<organism>
    <name type="scientific">Aspergillus novofumigatus (strain IBT 16806)</name>
    <dbReference type="NCBI Taxonomy" id="1392255"/>
    <lineage>
        <taxon>Eukaryota</taxon>
        <taxon>Fungi</taxon>
        <taxon>Dikarya</taxon>
        <taxon>Ascomycota</taxon>
        <taxon>Pezizomycotina</taxon>
        <taxon>Eurotiomycetes</taxon>
        <taxon>Eurotiomycetidae</taxon>
        <taxon>Eurotiales</taxon>
        <taxon>Aspergillaceae</taxon>
        <taxon>Aspergillus</taxon>
        <taxon>Aspergillus subgen. Fumigati</taxon>
    </lineage>
</organism>
<protein>
    <recommendedName>
        <fullName evidence="3">Transcriptional coactivator nsrH</fullName>
    </recommendedName>
    <alternativeName>
        <fullName evidence="3">Neosartorin biosynthesis cluster protein H</fullName>
    </alternativeName>
</protein>
<comment type="function">
    <text evidence="2">Transcriptional coactivator; part of the gene cluster that mediates the biosynthesis of the tetrahydroxanthone dimer neosartorin, which exhibits antibacterial activity.</text>
</comment>
<comment type="subcellular location">
    <subcellularLocation>
        <location evidence="4">Nucleus</location>
    </subcellularLocation>
</comment>
<name>NSRH_ASPN1</name>
<keyword id="KW-0238">DNA-binding</keyword>
<keyword id="KW-0539">Nucleus</keyword>
<keyword id="KW-1185">Reference proteome</keyword>
<keyword id="KW-0804">Transcription</keyword>
<keyword id="KW-0805">Transcription regulation</keyword>